<comment type="interaction">
    <interactant intactId="EBI-17973370">
        <id>Q969Y0</id>
    </interactant>
    <interactant intactId="EBI-1046040">
        <id>P00387</id>
        <label>CYB5R3</label>
    </interactant>
    <organismsDiffer>false</organismsDiffer>
    <experiments>3</experiments>
</comment>
<comment type="interaction">
    <interactant intactId="EBI-17973370">
        <id>Q969Y0</id>
    </interactant>
    <interactant intactId="EBI-17973325">
        <id>P60508</id>
        <label>ERVFRD-1</label>
    </interactant>
    <organismsDiffer>false</organismsDiffer>
    <experiments>3</experiments>
</comment>
<comment type="interaction">
    <interactant intactId="EBI-17973370">
        <id>Q969Y0</id>
    </interactant>
    <interactant intactId="EBI-18304435">
        <id>Q5JX71</id>
        <label>FAM209A</label>
    </interactant>
    <organismsDiffer>false</organismsDiffer>
    <experiments>3</experiments>
</comment>
<comment type="interaction">
    <interactant intactId="EBI-17973370">
        <id>Q969Y0</id>
    </interactant>
    <interactant intactId="EBI-5454865">
        <id>Q6IN84</id>
        <label>MRM1</label>
    </interactant>
    <organismsDiffer>false</organismsDiffer>
    <experiments>3</experiments>
</comment>
<comment type="interaction">
    <interactant intactId="EBI-17973370">
        <id>Q969Y0</id>
    </interactant>
    <interactant intactId="EBI-725454">
        <id>Q13438</id>
        <label>OS9</label>
    </interactant>
    <organismsDiffer>false</organismsDiffer>
    <experiments>2</experiments>
</comment>
<comment type="subcellular location">
    <subcellularLocation>
        <location evidence="2">Secreted</location>
    </subcellularLocation>
</comment>
<comment type="similarity">
    <text evidence="2">Belongs to the NXPE family.</text>
</comment>
<comment type="sequence caution" evidence="2">
    <conflict type="frameshift">
        <sequence resource="EMBL-CDS" id="AAQ13637"/>
    </conflict>
</comment>
<keyword id="KW-0325">Glycoprotein</keyword>
<keyword id="KW-1267">Proteomics identification</keyword>
<keyword id="KW-1185">Reference proteome</keyword>
<keyword id="KW-0964">Secreted</keyword>
<keyword id="KW-0732">Signal</keyword>
<feature type="signal peptide" evidence="1">
    <location>
        <begin position="1"/>
        <end position="30"/>
    </location>
</feature>
<feature type="chain" id="PRO_0000297594" description="NXPE family member 3">
    <location>
        <begin position="31"/>
        <end position="559"/>
    </location>
</feature>
<feature type="glycosylation site" description="N-linked (GlcNAc...) asparagine" evidence="1">
    <location>
        <position position="237"/>
    </location>
</feature>
<feature type="glycosylation site" description="N-linked (GlcNAc...) asparagine" evidence="1">
    <location>
        <position position="292"/>
    </location>
</feature>
<feature type="glycosylation site" description="N-linked (GlcNAc...) asparagine" evidence="1">
    <location>
        <position position="346"/>
    </location>
</feature>
<feature type="sequence variant" id="VAR_049024" description="In dbSNP:rs3796277.">
    <original>T</original>
    <variation>I</variation>
    <location>
        <position position="507"/>
    </location>
</feature>
<dbReference type="EMBL" id="AY358207">
    <property type="protein sequence ID" value="AAQ88574.1"/>
    <property type="molecule type" value="mRNA"/>
</dbReference>
<dbReference type="EMBL" id="AK054664">
    <property type="protein sequence ID" value="BAB70787.1"/>
    <property type="molecule type" value="mRNA"/>
</dbReference>
<dbReference type="EMBL" id="AK289689">
    <property type="protein sequence ID" value="BAF82378.1"/>
    <property type="molecule type" value="mRNA"/>
</dbReference>
<dbReference type="EMBL" id="CH471052">
    <property type="protein sequence ID" value="EAW79774.1"/>
    <property type="molecule type" value="Genomic_DNA"/>
</dbReference>
<dbReference type="EMBL" id="CH471052">
    <property type="protein sequence ID" value="EAW79775.1"/>
    <property type="molecule type" value="Genomic_DNA"/>
</dbReference>
<dbReference type="EMBL" id="BC009431">
    <property type="protein sequence ID" value="AAH09431.1"/>
    <property type="molecule type" value="mRNA"/>
</dbReference>
<dbReference type="EMBL" id="AF173890">
    <property type="protein sequence ID" value="AAQ13637.1"/>
    <property type="status" value="ALT_FRAME"/>
    <property type="molecule type" value="mRNA"/>
</dbReference>
<dbReference type="CCDS" id="CCDS2945.1"/>
<dbReference type="RefSeq" id="NP_001127928.1">
    <property type="nucleotide sequence ID" value="NM_001134456.2"/>
</dbReference>
<dbReference type="RefSeq" id="NP_001335919.1">
    <property type="nucleotide sequence ID" value="NM_001348990.2"/>
</dbReference>
<dbReference type="RefSeq" id="NP_001335920.1">
    <property type="nucleotide sequence ID" value="NM_001348991.2"/>
</dbReference>
<dbReference type="RefSeq" id="NP_001335921.1">
    <property type="nucleotide sequence ID" value="NM_001348992.2"/>
</dbReference>
<dbReference type="RefSeq" id="NP_001335922.1">
    <property type="nucleotide sequence ID" value="NM_001348993.2"/>
</dbReference>
<dbReference type="RefSeq" id="NP_001335923.1">
    <property type="nucleotide sequence ID" value="NM_001348994.2"/>
</dbReference>
<dbReference type="RefSeq" id="NP_001335924.1">
    <property type="nucleotide sequence ID" value="NM_001348995.2"/>
</dbReference>
<dbReference type="RefSeq" id="NP_659474.1">
    <property type="nucleotide sequence ID" value="NM_145037.4"/>
</dbReference>
<dbReference type="BioGRID" id="124878">
    <property type="interactions" value="39"/>
</dbReference>
<dbReference type="FunCoup" id="Q969Y0">
    <property type="interactions" value="390"/>
</dbReference>
<dbReference type="IntAct" id="Q969Y0">
    <property type="interactions" value="30"/>
</dbReference>
<dbReference type="STRING" id="9606.ENSP00000273347"/>
<dbReference type="GlyCosmos" id="Q969Y0">
    <property type="glycosylation" value="3 sites, No reported glycans"/>
</dbReference>
<dbReference type="GlyGen" id="Q969Y0">
    <property type="glycosylation" value="3 sites, 2 N-linked glycans (2 sites)"/>
</dbReference>
<dbReference type="iPTMnet" id="Q969Y0"/>
<dbReference type="PhosphoSitePlus" id="Q969Y0"/>
<dbReference type="BioMuta" id="NXPE3"/>
<dbReference type="DMDM" id="74731068"/>
<dbReference type="jPOST" id="Q969Y0"/>
<dbReference type="MassIVE" id="Q969Y0"/>
<dbReference type="PaxDb" id="9606-ENSP00000396421"/>
<dbReference type="PeptideAtlas" id="Q969Y0"/>
<dbReference type="ProteomicsDB" id="75876"/>
<dbReference type="Antibodypedia" id="51258">
    <property type="antibodies" value="39 antibodies from 12 providers"/>
</dbReference>
<dbReference type="DNASU" id="91775"/>
<dbReference type="Ensembl" id="ENST00000273347.10">
    <property type="protein sequence ID" value="ENSP00000273347.5"/>
    <property type="gene ID" value="ENSG00000144815.18"/>
</dbReference>
<dbReference type="Ensembl" id="ENST00000474165.6">
    <property type="protein sequence ID" value="ENSP00000419667.2"/>
    <property type="gene ID" value="ENSG00000144815.18"/>
</dbReference>
<dbReference type="Ensembl" id="ENST00000477909.5">
    <property type="protein sequence ID" value="ENSP00000418369.1"/>
    <property type="gene ID" value="ENSG00000144815.18"/>
</dbReference>
<dbReference type="Ensembl" id="ENST00000487830.2">
    <property type="protein sequence ID" value="ENSP00000515931.1"/>
    <property type="gene ID" value="ENSG00000144815.18"/>
</dbReference>
<dbReference type="Ensembl" id="ENST00000491511.6">
    <property type="protein sequence ID" value="ENSP00000417485.1"/>
    <property type="gene ID" value="ENSG00000144815.18"/>
</dbReference>
<dbReference type="Ensembl" id="ENST00000495842.6">
    <property type="protein sequence ID" value="ENSP00000418381.2"/>
    <property type="gene ID" value="ENSG00000144815.18"/>
</dbReference>
<dbReference type="Ensembl" id="ENST00000704530.1">
    <property type="protein sequence ID" value="ENSP00000515919.1"/>
    <property type="gene ID" value="ENSG00000144815.18"/>
</dbReference>
<dbReference type="Ensembl" id="ENST00000704532.1">
    <property type="protein sequence ID" value="ENSP00000515920.1"/>
    <property type="gene ID" value="ENSG00000144815.18"/>
</dbReference>
<dbReference type="Ensembl" id="ENST00000704539.1">
    <property type="protein sequence ID" value="ENSP00000515927.1"/>
    <property type="gene ID" value="ENSG00000144815.18"/>
</dbReference>
<dbReference type="Ensembl" id="ENST00000704551.1">
    <property type="protein sequence ID" value="ENSP00000515939.1"/>
    <property type="gene ID" value="ENSG00000144815.18"/>
</dbReference>
<dbReference type="Ensembl" id="ENST00000704552.1">
    <property type="protein sequence ID" value="ENSP00000515940.1"/>
    <property type="gene ID" value="ENSG00000144815.18"/>
</dbReference>
<dbReference type="GeneID" id="91775"/>
<dbReference type="KEGG" id="hsa:91775"/>
<dbReference type="MANE-Select" id="ENST00000273347.10">
    <property type="protein sequence ID" value="ENSP00000273347.5"/>
    <property type="RefSeq nucleotide sequence ID" value="NM_145037.4"/>
    <property type="RefSeq protein sequence ID" value="NP_659474.1"/>
</dbReference>
<dbReference type="UCSC" id="uc003dvn.4">
    <property type="organism name" value="human"/>
</dbReference>
<dbReference type="AGR" id="HGNC:28238"/>
<dbReference type="CTD" id="91775"/>
<dbReference type="DisGeNET" id="91775"/>
<dbReference type="GeneCards" id="NXPE3"/>
<dbReference type="HGNC" id="HGNC:28238">
    <property type="gene designation" value="NXPE3"/>
</dbReference>
<dbReference type="HPA" id="ENSG00000144815">
    <property type="expression patterns" value="Tissue enhanced (skeletal muscle, tongue)"/>
</dbReference>
<dbReference type="neXtProt" id="NX_Q969Y0"/>
<dbReference type="OpenTargets" id="ENSG00000144815"/>
<dbReference type="PharmGKB" id="PA134977295"/>
<dbReference type="VEuPathDB" id="HostDB:ENSG00000144815"/>
<dbReference type="eggNOG" id="ENOG502QUD6">
    <property type="taxonomic scope" value="Eukaryota"/>
</dbReference>
<dbReference type="GeneTree" id="ENSGT00950000182866"/>
<dbReference type="HOGENOM" id="CLU_031119_2_0_1"/>
<dbReference type="InParanoid" id="Q969Y0"/>
<dbReference type="OMA" id="DQHPLCN"/>
<dbReference type="OrthoDB" id="5950832at2759"/>
<dbReference type="PAN-GO" id="Q969Y0">
    <property type="GO annotations" value="0 GO annotations based on evolutionary models"/>
</dbReference>
<dbReference type="PhylomeDB" id="Q969Y0"/>
<dbReference type="TreeFam" id="TF329555"/>
<dbReference type="PathwayCommons" id="Q969Y0"/>
<dbReference type="SignaLink" id="Q969Y0"/>
<dbReference type="BioGRID-ORCS" id="91775">
    <property type="hits" value="22 hits in 1151 CRISPR screens"/>
</dbReference>
<dbReference type="ChiTaRS" id="NXPE3">
    <property type="organism name" value="human"/>
</dbReference>
<dbReference type="GenomeRNAi" id="91775"/>
<dbReference type="Pharos" id="Q969Y0">
    <property type="development level" value="Tdark"/>
</dbReference>
<dbReference type="PRO" id="PR:Q969Y0"/>
<dbReference type="Proteomes" id="UP000005640">
    <property type="component" value="Chromosome 3"/>
</dbReference>
<dbReference type="RNAct" id="Q969Y0">
    <property type="molecule type" value="protein"/>
</dbReference>
<dbReference type="Bgee" id="ENSG00000144815">
    <property type="expression patterns" value="Expressed in buccal mucosa cell and 161 other cell types or tissues"/>
</dbReference>
<dbReference type="ExpressionAtlas" id="Q969Y0">
    <property type="expression patterns" value="baseline and differential"/>
</dbReference>
<dbReference type="GO" id="GO:0005576">
    <property type="term" value="C:extracellular region"/>
    <property type="evidence" value="ECO:0007669"/>
    <property type="project" value="UniProtKB-SubCell"/>
</dbReference>
<dbReference type="InterPro" id="IPR014756">
    <property type="entry name" value="Ig_E-set"/>
</dbReference>
<dbReference type="InterPro" id="IPR057106">
    <property type="entry name" value="NXPE4_C"/>
</dbReference>
<dbReference type="InterPro" id="IPR026845">
    <property type="entry name" value="NXPH/NXPE"/>
</dbReference>
<dbReference type="PANTHER" id="PTHR16165">
    <property type="entry name" value="NXPE FAMILY MEMBER"/>
    <property type="match status" value="1"/>
</dbReference>
<dbReference type="PANTHER" id="PTHR16165:SF9">
    <property type="entry name" value="NXPE FAMILY MEMBER 3"/>
    <property type="match status" value="1"/>
</dbReference>
<dbReference type="Pfam" id="PF06312">
    <property type="entry name" value="Neurexophilin"/>
    <property type="match status" value="1"/>
</dbReference>
<dbReference type="Pfam" id="PF24536">
    <property type="entry name" value="NXPE4_C"/>
    <property type="match status" value="1"/>
</dbReference>
<dbReference type="SUPFAM" id="SSF81296">
    <property type="entry name" value="E set domains"/>
    <property type="match status" value="1"/>
</dbReference>
<evidence type="ECO:0000255" key="1"/>
<evidence type="ECO:0000305" key="2"/>
<sequence length="559" mass="63800">MWTNFFKLRLFCCLLAVLMVVVLVINVTQVEYLDHETVSATFIDSSGQFVSSQVTGISRNPYCGYDQQTLSSQERMEEDSLLAALHRQVPDVGPVPFVKSTDPSSSYFVILNSAAFFKVGSQLEVLVHVQDFQRKPKKYGGDYLQARIHSLKLQAGAVGRVVDYQNGFYKVFFTLLWPGKVKVSVSLVHPSEGIRVLQRLQEDKPDRVYFKSLFRSGRISETTECNVCLPGNLPLCNFTDLYTGEPWFCFKPKKLPCSSRITHFKGGYLKGLLTAAESAFFQSGVNIKMPVNSSGPDWVTVIPRRIKETNSLELSQGSGTFPSGYYYKDQWRPRKFKMRQFNDPDNITECLQRKVVHLFGDSTIRQWFEYLTTFVPDLVEFNLGSPKNVGPFLAVDQKHNILLKYRCHGPPIRFTTVFSNELHYVANELNGIVGGKNTVVAIAVWSHFSTFPLEVYIRRLRNIRRAVVRLLDRSPKTVVVIRTANAQELGPEVSLFNSDWYNFQLDTILRRMFSGVGVYLVDAWEMTLAHYLPHKLHPDEVIVKNQLDMFLSFVCPLET</sequence>
<gene>
    <name type="primary">NXPE3</name>
    <name type="synonym">FAM55C</name>
    <name type="ORF">MSTP115</name>
    <name type="ORF">UNQ5791/PRO19596</name>
</gene>
<reference key="1">
    <citation type="journal article" date="2003" name="Genome Res.">
        <title>The secreted protein discovery initiative (SPDI), a large-scale effort to identify novel human secreted and transmembrane proteins: a bioinformatics assessment.</title>
        <authorList>
            <person name="Clark H.F."/>
            <person name="Gurney A.L."/>
            <person name="Abaya E."/>
            <person name="Baker K."/>
            <person name="Baldwin D.T."/>
            <person name="Brush J."/>
            <person name="Chen J."/>
            <person name="Chow B."/>
            <person name="Chui C."/>
            <person name="Crowley C."/>
            <person name="Currell B."/>
            <person name="Deuel B."/>
            <person name="Dowd P."/>
            <person name="Eaton D."/>
            <person name="Foster J.S."/>
            <person name="Grimaldi C."/>
            <person name="Gu Q."/>
            <person name="Hass P.E."/>
            <person name="Heldens S."/>
            <person name="Huang A."/>
            <person name="Kim H.S."/>
            <person name="Klimowski L."/>
            <person name="Jin Y."/>
            <person name="Johnson S."/>
            <person name="Lee J."/>
            <person name="Lewis L."/>
            <person name="Liao D."/>
            <person name="Mark M.R."/>
            <person name="Robbie E."/>
            <person name="Sanchez C."/>
            <person name="Schoenfeld J."/>
            <person name="Seshagiri S."/>
            <person name="Simmons L."/>
            <person name="Singh J."/>
            <person name="Smith V."/>
            <person name="Stinson J."/>
            <person name="Vagts A."/>
            <person name="Vandlen R.L."/>
            <person name="Watanabe C."/>
            <person name="Wieand D."/>
            <person name="Woods K."/>
            <person name="Xie M.-H."/>
            <person name="Yansura D.G."/>
            <person name="Yi S."/>
            <person name="Yu G."/>
            <person name="Yuan J."/>
            <person name="Zhang M."/>
            <person name="Zhang Z."/>
            <person name="Goddard A.D."/>
            <person name="Wood W.I."/>
            <person name="Godowski P.J."/>
            <person name="Gray A.M."/>
        </authorList>
    </citation>
    <scope>NUCLEOTIDE SEQUENCE [LARGE SCALE MRNA]</scope>
</reference>
<reference key="2">
    <citation type="journal article" date="2004" name="Nat. Genet.">
        <title>Complete sequencing and characterization of 21,243 full-length human cDNAs.</title>
        <authorList>
            <person name="Ota T."/>
            <person name="Suzuki Y."/>
            <person name="Nishikawa T."/>
            <person name="Otsuki T."/>
            <person name="Sugiyama T."/>
            <person name="Irie R."/>
            <person name="Wakamatsu A."/>
            <person name="Hayashi K."/>
            <person name="Sato H."/>
            <person name="Nagai K."/>
            <person name="Kimura K."/>
            <person name="Makita H."/>
            <person name="Sekine M."/>
            <person name="Obayashi M."/>
            <person name="Nishi T."/>
            <person name="Shibahara T."/>
            <person name="Tanaka T."/>
            <person name="Ishii S."/>
            <person name="Yamamoto J."/>
            <person name="Saito K."/>
            <person name="Kawai Y."/>
            <person name="Isono Y."/>
            <person name="Nakamura Y."/>
            <person name="Nagahari K."/>
            <person name="Murakami K."/>
            <person name="Yasuda T."/>
            <person name="Iwayanagi T."/>
            <person name="Wagatsuma M."/>
            <person name="Shiratori A."/>
            <person name="Sudo H."/>
            <person name="Hosoiri T."/>
            <person name="Kaku Y."/>
            <person name="Kodaira H."/>
            <person name="Kondo H."/>
            <person name="Sugawara M."/>
            <person name="Takahashi M."/>
            <person name="Kanda K."/>
            <person name="Yokoi T."/>
            <person name="Furuya T."/>
            <person name="Kikkawa E."/>
            <person name="Omura Y."/>
            <person name="Abe K."/>
            <person name="Kamihara K."/>
            <person name="Katsuta N."/>
            <person name="Sato K."/>
            <person name="Tanikawa M."/>
            <person name="Yamazaki M."/>
            <person name="Ninomiya K."/>
            <person name="Ishibashi T."/>
            <person name="Yamashita H."/>
            <person name="Murakawa K."/>
            <person name="Fujimori K."/>
            <person name="Tanai H."/>
            <person name="Kimata M."/>
            <person name="Watanabe M."/>
            <person name="Hiraoka S."/>
            <person name="Chiba Y."/>
            <person name="Ishida S."/>
            <person name="Ono Y."/>
            <person name="Takiguchi S."/>
            <person name="Watanabe S."/>
            <person name="Yosida M."/>
            <person name="Hotuta T."/>
            <person name="Kusano J."/>
            <person name="Kanehori K."/>
            <person name="Takahashi-Fujii A."/>
            <person name="Hara H."/>
            <person name="Tanase T.-O."/>
            <person name="Nomura Y."/>
            <person name="Togiya S."/>
            <person name="Komai F."/>
            <person name="Hara R."/>
            <person name="Takeuchi K."/>
            <person name="Arita M."/>
            <person name="Imose N."/>
            <person name="Musashino K."/>
            <person name="Yuuki H."/>
            <person name="Oshima A."/>
            <person name="Sasaki N."/>
            <person name="Aotsuka S."/>
            <person name="Yoshikawa Y."/>
            <person name="Matsunawa H."/>
            <person name="Ichihara T."/>
            <person name="Shiohata N."/>
            <person name="Sano S."/>
            <person name="Moriya S."/>
            <person name="Momiyama H."/>
            <person name="Satoh N."/>
            <person name="Takami S."/>
            <person name="Terashima Y."/>
            <person name="Suzuki O."/>
            <person name="Nakagawa S."/>
            <person name="Senoh A."/>
            <person name="Mizoguchi H."/>
            <person name="Goto Y."/>
            <person name="Shimizu F."/>
            <person name="Wakebe H."/>
            <person name="Hishigaki H."/>
            <person name="Watanabe T."/>
            <person name="Sugiyama A."/>
            <person name="Takemoto M."/>
            <person name="Kawakami B."/>
            <person name="Yamazaki M."/>
            <person name="Watanabe K."/>
            <person name="Kumagai A."/>
            <person name="Itakura S."/>
            <person name="Fukuzumi Y."/>
            <person name="Fujimori Y."/>
            <person name="Komiyama M."/>
            <person name="Tashiro H."/>
            <person name="Tanigami A."/>
            <person name="Fujiwara T."/>
            <person name="Ono T."/>
            <person name="Yamada K."/>
            <person name="Fujii Y."/>
            <person name="Ozaki K."/>
            <person name="Hirao M."/>
            <person name="Ohmori Y."/>
            <person name="Kawabata A."/>
            <person name="Hikiji T."/>
            <person name="Kobatake N."/>
            <person name="Inagaki H."/>
            <person name="Ikema Y."/>
            <person name="Okamoto S."/>
            <person name="Okitani R."/>
            <person name="Kawakami T."/>
            <person name="Noguchi S."/>
            <person name="Itoh T."/>
            <person name="Shigeta K."/>
            <person name="Senba T."/>
            <person name="Matsumura K."/>
            <person name="Nakajima Y."/>
            <person name="Mizuno T."/>
            <person name="Morinaga M."/>
            <person name="Sasaki M."/>
            <person name="Togashi T."/>
            <person name="Oyama M."/>
            <person name="Hata H."/>
            <person name="Watanabe M."/>
            <person name="Komatsu T."/>
            <person name="Mizushima-Sugano J."/>
            <person name="Satoh T."/>
            <person name="Shirai Y."/>
            <person name="Takahashi Y."/>
            <person name="Nakagawa K."/>
            <person name="Okumura K."/>
            <person name="Nagase T."/>
            <person name="Nomura N."/>
            <person name="Kikuchi H."/>
            <person name="Masuho Y."/>
            <person name="Yamashita R."/>
            <person name="Nakai K."/>
            <person name="Yada T."/>
            <person name="Nakamura Y."/>
            <person name="Ohara O."/>
            <person name="Isogai T."/>
            <person name="Sugano S."/>
        </authorList>
    </citation>
    <scope>NUCLEOTIDE SEQUENCE [LARGE SCALE MRNA]</scope>
    <source>
        <tissue>Amygdala</tissue>
        <tissue>Glial tumor</tissue>
    </source>
</reference>
<reference key="3">
    <citation type="submission" date="2005-09" db="EMBL/GenBank/DDBJ databases">
        <authorList>
            <person name="Mural R.J."/>
            <person name="Istrail S."/>
            <person name="Sutton G.G."/>
            <person name="Florea L."/>
            <person name="Halpern A.L."/>
            <person name="Mobarry C.M."/>
            <person name="Lippert R."/>
            <person name="Walenz B."/>
            <person name="Shatkay H."/>
            <person name="Dew I."/>
            <person name="Miller J.R."/>
            <person name="Flanigan M.J."/>
            <person name="Edwards N.J."/>
            <person name="Bolanos R."/>
            <person name="Fasulo D."/>
            <person name="Halldorsson B.V."/>
            <person name="Hannenhalli S."/>
            <person name="Turner R."/>
            <person name="Yooseph S."/>
            <person name="Lu F."/>
            <person name="Nusskern D.R."/>
            <person name="Shue B.C."/>
            <person name="Zheng X.H."/>
            <person name="Zhong F."/>
            <person name="Delcher A.L."/>
            <person name="Huson D.H."/>
            <person name="Kravitz S.A."/>
            <person name="Mouchard L."/>
            <person name="Reinert K."/>
            <person name="Remington K.A."/>
            <person name="Clark A.G."/>
            <person name="Waterman M.S."/>
            <person name="Eichler E.E."/>
            <person name="Adams M.D."/>
            <person name="Hunkapiller M.W."/>
            <person name="Myers E.W."/>
            <person name="Venter J.C."/>
        </authorList>
    </citation>
    <scope>NUCLEOTIDE SEQUENCE [LARGE SCALE GENOMIC DNA]</scope>
</reference>
<reference key="4">
    <citation type="journal article" date="2004" name="Genome Res.">
        <title>The status, quality, and expansion of the NIH full-length cDNA project: the Mammalian Gene Collection (MGC).</title>
        <authorList>
            <consortium name="The MGC Project Team"/>
        </authorList>
    </citation>
    <scope>NUCLEOTIDE SEQUENCE [LARGE SCALE MRNA]</scope>
    <source>
        <tissue>Brain</tissue>
    </source>
</reference>
<reference key="5">
    <citation type="submission" date="1999-08" db="EMBL/GenBank/DDBJ databases">
        <title>Homo sapiens normal heart mRNA MST115.</title>
        <authorList>
            <person name="Zhao B."/>
            <person name="Zhang Q."/>
            <person name="Zheng W.Y."/>
            <person name="Xu H.S."/>
            <person name="Liu B.H."/>
            <person name="Lu H."/>
            <person name="Gong Q."/>
            <person name="Tong Y.K."/>
            <person name="Liu B."/>
            <person name="Wang X.Y."/>
            <person name="Liu Y.Q."/>
            <person name="Sheng H."/>
            <person name="Qin B.M."/>
            <person name="Hui R.T."/>
        </authorList>
    </citation>
    <scope>NUCLEOTIDE SEQUENCE [LARGE SCALE MRNA] OF 241-559</scope>
    <source>
        <tissue>Heart</tissue>
    </source>
</reference>
<name>NXPE3_HUMAN</name>
<organism>
    <name type="scientific">Homo sapiens</name>
    <name type="common">Human</name>
    <dbReference type="NCBI Taxonomy" id="9606"/>
    <lineage>
        <taxon>Eukaryota</taxon>
        <taxon>Metazoa</taxon>
        <taxon>Chordata</taxon>
        <taxon>Craniata</taxon>
        <taxon>Vertebrata</taxon>
        <taxon>Euteleostomi</taxon>
        <taxon>Mammalia</taxon>
        <taxon>Eutheria</taxon>
        <taxon>Euarchontoglires</taxon>
        <taxon>Primates</taxon>
        <taxon>Haplorrhini</taxon>
        <taxon>Catarrhini</taxon>
        <taxon>Hominidae</taxon>
        <taxon>Homo</taxon>
    </lineage>
</organism>
<accession>Q969Y0</accession>
<accession>A8K0X4</accession>
<accession>D3DN53</accession>
<accession>Q7Z2S8</accession>
<protein>
    <recommendedName>
        <fullName>NXPE family member 3</fullName>
    </recommendedName>
    <alternativeName>
        <fullName>Protein FAM55C</fullName>
    </alternativeName>
</protein>
<proteinExistence type="evidence at protein level"/>